<comment type="function">
    <text evidence="1">Peptide chain release factor 1 directs the termination of translation in response to the peptide chain termination codons UAG and UAA.</text>
</comment>
<comment type="subcellular location">
    <subcellularLocation>
        <location evidence="1">Cytoplasm</location>
    </subcellularLocation>
</comment>
<comment type="PTM">
    <text evidence="1">Methylated by PrmC. Methylation increases the termination efficiency of RF1.</text>
</comment>
<comment type="similarity">
    <text evidence="1">Belongs to the prokaryotic/mitochondrial release factor family.</text>
</comment>
<keyword id="KW-0963">Cytoplasm</keyword>
<keyword id="KW-0488">Methylation</keyword>
<keyword id="KW-0648">Protein biosynthesis</keyword>
<keyword id="KW-1185">Reference proteome</keyword>
<gene>
    <name evidence="1" type="primary">prfA</name>
    <name type="ordered locus">CYB_1586</name>
</gene>
<organism>
    <name type="scientific">Synechococcus sp. (strain JA-2-3B'a(2-13))</name>
    <name type="common">Cyanobacteria bacterium Yellowstone B-Prime</name>
    <dbReference type="NCBI Taxonomy" id="321332"/>
    <lineage>
        <taxon>Bacteria</taxon>
        <taxon>Bacillati</taxon>
        <taxon>Cyanobacteriota</taxon>
        <taxon>Cyanophyceae</taxon>
        <taxon>Synechococcales</taxon>
        <taxon>Synechococcaceae</taxon>
        <taxon>Synechococcus</taxon>
    </lineage>
</organism>
<accession>Q2JL68</accession>
<name>RF1_SYNJB</name>
<sequence>MASAQLIDQLKNVEATFQELTVRLADPDVATDPAELQRIAKARSSLEATVQAFHDWQKLNRDLQQTEELLRESASDPELEAMARAELEQLRARQEQLEEKLTLLLLPRDPNDDKNIMLEIRAGTGGEEAALWAADLARMYTRYAEKLGWSVRLASLSEGELGGYKEAILEIQGDQVYSKLKFEAGVHRVQRVPVTEAQGRVHTSTATVAVMPEVDEVEVVIDPKDIEIKTARSGGAGGQNVNKVETAVDLLHKPTGIRVFCTEERSQLQNRQRAMQILRAKLYEMKLQEQQASISSARRMQVGTGSRSEKIRTYNYKDNRVTDHRLNQNFPLQPILDGELDDLIQACIGLYQKELLAELS</sequence>
<feature type="chain" id="PRO_0000263376" description="Peptide chain release factor 1">
    <location>
        <begin position="1"/>
        <end position="360"/>
    </location>
</feature>
<feature type="modified residue" description="N5-methylglutamine" evidence="1">
    <location>
        <position position="239"/>
    </location>
</feature>
<dbReference type="EMBL" id="CP000240">
    <property type="protein sequence ID" value="ABD02550.1"/>
    <property type="molecule type" value="Genomic_DNA"/>
</dbReference>
<dbReference type="RefSeq" id="WP_011433196.1">
    <property type="nucleotide sequence ID" value="NC_007776.1"/>
</dbReference>
<dbReference type="SMR" id="Q2JL68"/>
<dbReference type="STRING" id="321332.CYB_1586"/>
<dbReference type="KEGG" id="cyb:CYB_1586"/>
<dbReference type="eggNOG" id="COG0216">
    <property type="taxonomic scope" value="Bacteria"/>
</dbReference>
<dbReference type="HOGENOM" id="CLU_036856_0_1_3"/>
<dbReference type="OrthoDB" id="9806673at2"/>
<dbReference type="Proteomes" id="UP000001938">
    <property type="component" value="Chromosome"/>
</dbReference>
<dbReference type="GO" id="GO:0005737">
    <property type="term" value="C:cytoplasm"/>
    <property type="evidence" value="ECO:0007669"/>
    <property type="project" value="UniProtKB-SubCell"/>
</dbReference>
<dbReference type="GO" id="GO:0016149">
    <property type="term" value="F:translation release factor activity, codon specific"/>
    <property type="evidence" value="ECO:0007669"/>
    <property type="project" value="UniProtKB-UniRule"/>
</dbReference>
<dbReference type="FunFam" id="3.30.160.20:FF:000004">
    <property type="entry name" value="Peptide chain release factor 1"/>
    <property type="match status" value="1"/>
</dbReference>
<dbReference type="FunFam" id="3.30.70.1660:FF:000002">
    <property type="entry name" value="Peptide chain release factor 1"/>
    <property type="match status" value="1"/>
</dbReference>
<dbReference type="FunFam" id="3.30.70.1660:FF:000014">
    <property type="entry name" value="Peptide chain release factor 1"/>
    <property type="match status" value="1"/>
</dbReference>
<dbReference type="Gene3D" id="3.30.160.20">
    <property type="match status" value="1"/>
</dbReference>
<dbReference type="Gene3D" id="3.30.70.1660">
    <property type="match status" value="1"/>
</dbReference>
<dbReference type="Gene3D" id="6.10.140.1950">
    <property type="match status" value="1"/>
</dbReference>
<dbReference type="HAMAP" id="MF_00093">
    <property type="entry name" value="Rel_fac_1"/>
    <property type="match status" value="1"/>
</dbReference>
<dbReference type="InterPro" id="IPR005139">
    <property type="entry name" value="PCRF"/>
</dbReference>
<dbReference type="InterPro" id="IPR000352">
    <property type="entry name" value="Pep_chain_release_fac_I"/>
</dbReference>
<dbReference type="InterPro" id="IPR045853">
    <property type="entry name" value="Pep_chain_release_fac_I_sf"/>
</dbReference>
<dbReference type="InterPro" id="IPR050057">
    <property type="entry name" value="Prokaryotic/Mito_RF"/>
</dbReference>
<dbReference type="InterPro" id="IPR004373">
    <property type="entry name" value="RF-1"/>
</dbReference>
<dbReference type="NCBIfam" id="TIGR00019">
    <property type="entry name" value="prfA"/>
    <property type="match status" value="1"/>
</dbReference>
<dbReference type="NCBIfam" id="NF001859">
    <property type="entry name" value="PRK00591.1"/>
    <property type="match status" value="1"/>
</dbReference>
<dbReference type="PANTHER" id="PTHR43804">
    <property type="entry name" value="LD18447P"/>
    <property type="match status" value="1"/>
</dbReference>
<dbReference type="PANTHER" id="PTHR43804:SF8">
    <property type="entry name" value="PEPTIDE CHAIN RELEASE FACTOR APG3, CHLOROPLASTIC"/>
    <property type="match status" value="1"/>
</dbReference>
<dbReference type="Pfam" id="PF03462">
    <property type="entry name" value="PCRF"/>
    <property type="match status" value="1"/>
</dbReference>
<dbReference type="Pfam" id="PF00472">
    <property type="entry name" value="RF-1"/>
    <property type="match status" value="1"/>
</dbReference>
<dbReference type="SMART" id="SM00937">
    <property type="entry name" value="PCRF"/>
    <property type="match status" value="1"/>
</dbReference>
<dbReference type="SUPFAM" id="SSF75620">
    <property type="entry name" value="Release factor"/>
    <property type="match status" value="1"/>
</dbReference>
<dbReference type="PROSITE" id="PS00745">
    <property type="entry name" value="RF_PROK_I"/>
    <property type="match status" value="1"/>
</dbReference>
<evidence type="ECO:0000255" key="1">
    <source>
        <dbReference type="HAMAP-Rule" id="MF_00093"/>
    </source>
</evidence>
<reference key="1">
    <citation type="journal article" date="2007" name="ISME J.">
        <title>Population level functional diversity in a microbial community revealed by comparative genomic and metagenomic analyses.</title>
        <authorList>
            <person name="Bhaya D."/>
            <person name="Grossman A.R."/>
            <person name="Steunou A.-S."/>
            <person name="Khuri N."/>
            <person name="Cohan F.M."/>
            <person name="Hamamura N."/>
            <person name="Melendrez M.C."/>
            <person name="Bateson M.M."/>
            <person name="Ward D.M."/>
            <person name="Heidelberg J.F."/>
        </authorList>
    </citation>
    <scope>NUCLEOTIDE SEQUENCE [LARGE SCALE GENOMIC DNA]</scope>
    <source>
        <strain>JA-2-3B'a(2-13)</strain>
    </source>
</reference>
<protein>
    <recommendedName>
        <fullName evidence="1">Peptide chain release factor 1</fullName>
        <shortName evidence="1">RF-1</shortName>
    </recommendedName>
</protein>
<proteinExistence type="inferred from homology"/>